<sequence>MKVVVVGCTHAGTSAVKSILANHPEAEVTVYERNDNISFLSCGIALYVGGVVKNAADLFYSNPEELASLGATVKMEHNVEEINVDDKTVTAKNLQTGATETVSYDKLVMTTGSWPIIPPIPGIDAENILLCKNYSQANVIIEKAKDAKRVVVVGGGYIGIELVEAFVESGKQVTLVDGLDRILNKYLDKPFTDVLEKELVDRGVNLALGENVQQFVADEQGKVAKVITPSQEFEADMVIMCVGFRPNTELLKDKVDMLPNGAIEVNEYMQTSNPDIFAAGDSAVVHYNPSQTKNYIPLATNAVRQGMLVGRNLTEQKLAYRGTQGTSGLYLFGWKIGSTGVTKESAKLNGLDVEATVFEDNYRPEFMPTTEKVLMELVYEKGTQRIVGGQLMSKYDITQSANTLSLAVQNKMTVEDLAISDFFFQPHFDRPWNYLNLLAQAALENM</sequence>
<keyword id="KW-0903">Direct protein sequencing</keyword>
<keyword id="KW-0274">FAD</keyword>
<keyword id="KW-0285">Flavoprotein</keyword>
<keyword id="KW-0520">NAD</keyword>
<keyword id="KW-0558">Oxidation</keyword>
<keyword id="KW-0560">Oxidoreductase</keyword>
<keyword id="KW-0676">Redox-active center</keyword>
<keyword id="KW-1185">Reference proteome</keyword>
<gene>
    <name type="primary">nox</name>
    <name type="ordered locus">EF_1586</name>
</gene>
<protein>
    <recommendedName>
        <fullName>NADH oxidase</fullName>
        <shortName>NOXase</shortName>
        <ecNumber evidence="2">1.6.3.4</ecNumber>
    </recommendedName>
</protein>
<comment type="function">
    <text>Catalyzes the four-electron reduction of molecular oxygen to water.</text>
</comment>
<comment type="catalytic activity">
    <molecule>NADH oxidase</molecule>
    <reaction evidence="2">
        <text>2 NADH + O2 + 2 H(+) = 2 NAD(+) + 2 H2O</text>
        <dbReference type="Rhea" id="RHEA:37799"/>
        <dbReference type="ChEBI" id="CHEBI:15377"/>
        <dbReference type="ChEBI" id="CHEBI:15378"/>
        <dbReference type="ChEBI" id="CHEBI:15379"/>
        <dbReference type="ChEBI" id="CHEBI:57540"/>
        <dbReference type="ChEBI" id="CHEBI:57945"/>
        <dbReference type="EC" id="1.6.3.4"/>
    </reaction>
</comment>
<comment type="cofactor">
    <cofactor evidence="1">
        <name>FAD</name>
        <dbReference type="ChEBI" id="CHEBI:57692"/>
    </cofactor>
    <text evidence="1">Binds 1 FAD per subunit.</text>
</comment>
<comment type="subunit">
    <text>Homodimer.</text>
</comment>
<comment type="PTM">
    <text>The N-terminus is blocked.</text>
</comment>
<comment type="similarity">
    <text evidence="6">Belongs to the class-III pyridine nucleotide-disulfide oxidoreductase family.</text>
</comment>
<evidence type="ECO:0000250" key="1"/>
<evidence type="ECO:0000250" key="2">
    <source>
        <dbReference type="UniProtKB" id="A2RIB7"/>
    </source>
</evidence>
<evidence type="ECO:0000250" key="3">
    <source>
        <dbReference type="UniProtKB" id="P37062"/>
    </source>
</evidence>
<evidence type="ECO:0000250" key="4">
    <source>
        <dbReference type="UniProtKB" id="Q5XC60"/>
    </source>
</evidence>
<evidence type="ECO:0000269" key="5">
    <source>
    </source>
</evidence>
<evidence type="ECO:0000305" key="6"/>
<feature type="chain" id="PRO_0000184701" description="NADH oxidase">
    <location>
        <begin position="1"/>
        <end position="446"/>
    </location>
</feature>
<feature type="active site" description="Proton acceptor" evidence="3">
    <location>
        <position position="10"/>
    </location>
</feature>
<feature type="active site" description="Redox-active" evidence="5">
    <location>
        <position position="42"/>
    </location>
</feature>
<feature type="binding site" evidence="1">
    <location>
        <begin position="7"/>
        <end position="11"/>
    </location>
    <ligand>
        <name>FAD</name>
        <dbReference type="ChEBI" id="CHEBI:57692"/>
    </ligand>
</feature>
<feature type="binding site" evidence="4">
    <location>
        <position position="32"/>
    </location>
    <ligand>
        <name>FAD</name>
        <dbReference type="ChEBI" id="CHEBI:57692"/>
    </ligand>
</feature>
<feature type="binding site" evidence="4">
    <location>
        <position position="42"/>
    </location>
    <ligand>
        <name>FAD</name>
        <dbReference type="ChEBI" id="CHEBI:57692"/>
    </ligand>
</feature>
<feature type="binding site" evidence="4">
    <location>
        <position position="79"/>
    </location>
    <ligand>
        <name>FAD</name>
        <dbReference type="ChEBI" id="CHEBI:57692"/>
    </ligand>
</feature>
<feature type="binding site" evidence="1">
    <location>
        <begin position="110"/>
        <end position="113"/>
    </location>
    <ligand>
        <name>FAD</name>
        <dbReference type="ChEBI" id="CHEBI:57692"/>
    </ligand>
</feature>
<feature type="binding site" evidence="4">
    <location>
        <position position="132"/>
    </location>
    <ligand>
        <name>FAD</name>
        <dbReference type="ChEBI" id="CHEBI:57692"/>
    </ligand>
</feature>
<feature type="binding site" evidence="1">
    <location>
        <begin position="150"/>
        <end position="165"/>
    </location>
    <ligand>
        <name>NAD(+)</name>
        <dbReference type="ChEBI" id="CHEBI:57540"/>
    </ligand>
</feature>
<feature type="binding site" evidence="4">
    <location>
        <position position="157"/>
    </location>
    <ligand>
        <name>FAD</name>
        <dbReference type="ChEBI" id="CHEBI:57692"/>
    </ligand>
</feature>
<feature type="binding site" evidence="3">
    <location>
        <position position="177"/>
    </location>
    <ligand>
        <name>NAD(+)</name>
        <dbReference type="ChEBI" id="CHEBI:57540"/>
    </ligand>
</feature>
<feature type="binding site" evidence="3">
    <location>
        <position position="186"/>
    </location>
    <ligand>
        <name>NAD(+)</name>
        <dbReference type="ChEBI" id="CHEBI:57540"/>
    </ligand>
</feature>
<feature type="binding site" evidence="3">
    <location>
        <position position="243"/>
    </location>
    <ligand>
        <name>NAD(+)</name>
        <dbReference type="ChEBI" id="CHEBI:57540"/>
    </ligand>
</feature>
<feature type="binding site" evidence="1">
    <location>
        <begin position="271"/>
        <end position="281"/>
    </location>
    <ligand>
        <name>FAD</name>
        <dbReference type="ChEBI" id="CHEBI:57692"/>
    </ligand>
</feature>
<feature type="binding site" evidence="4">
    <location>
        <position position="298"/>
    </location>
    <ligand>
        <name>FAD</name>
        <dbReference type="ChEBI" id="CHEBI:57692"/>
    </ligand>
</feature>
<feature type="binding site" evidence="4">
    <location>
        <position position="299"/>
    </location>
    <ligand>
        <name>FAD</name>
        <dbReference type="ChEBI" id="CHEBI:57692"/>
    </ligand>
</feature>
<feature type="binding site" evidence="4">
    <location>
        <position position="300"/>
    </location>
    <ligand>
        <name>FAD</name>
        <dbReference type="ChEBI" id="CHEBI:57692"/>
    </ligand>
</feature>
<feature type="binding site" evidence="3">
    <location>
        <position position="328"/>
    </location>
    <ligand>
        <name>NAD(+)</name>
        <dbReference type="ChEBI" id="CHEBI:57540"/>
    </ligand>
</feature>
<feature type="binding site" evidence="4">
    <location>
        <position position="424"/>
    </location>
    <ligand>
        <name>FAD</name>
        <dbReference type="ChEBI" id="CHEBI:57692"/>
    </ligand>
</feature>
<feature type="modified residue" description="Cysteine sulfinic acid (-SO2H)" evidence="4">
    <location>
        <position position="42"/>
    </location>
</feature>
<name>NAOX_ENTFA</name>
<reference key="1">
    <citation type="journal article" date="1992" name="J. Mol. Biol.">
        <title>Molecular cloning and analysis of the gene encoding the NADH oxidase from Streptococcus faecalis 10C1. Comparison with NADH peroxidase and the flavoprotein disulfide reductases.</title>
        <authorList>
            <person name="Ross R.P."/>
            <person name="Claiborne A."/>
        </authorList>
    </citation>
    <scope>NUCLEOTIDE SEQUENCE [GENOMIC DNA]</scope>
    <source>
        <strain>ATCC 11700 / DSM 20409 / NCIMB 8661 / 10C1</strain>
    </source>
</reference>
<reference key="2">
    <citation type="journal article" date="2003" name="Science">
        <title>Role of mobile DNA in the evolution of vancomycin-resistant Enterococcus faecalis.</title>
        <authorList>
            <person name="Paulsen I.T."/>
            <person name="Banerjei L."/>
            <person name="Myers G.S.A."/>
            <person name="Nelson K.E."/>
            <person name="Seshadri R."/>
            <person name="Read T.D."/>
            <person name="Fouts D.E."/>
            <person name="Eisen J.A."/>
            <person name="Gill S.R."/>
            <person name="Heidelberg J.F."/>
            <person name="Tettelin H."/>
            <person name="Dodson R.J."/>
            <person name="Umayam L.A."/>
            <person name="Brinkac L.M."/>
            <person name="Beanan M.J."/>
            <person name="Daugherty S.C."/>
            <person name="DeBoy R.T."/>
            <person name="Durkin S.A."/>
            <person name="Kolonay J.F."/>
            <person name="Madupu R."/>
            <person name="Nelson W.C."/>
            <person name="Vamathevan J.J."/>
            <person name="Tran B."/>
            <person name="Upton J."/>
            <person name="Hansen T."/>
            <person name="Shetty J."/>
            <person name="Khouri H.M."/>
            <person name="Utterback T.R."/>
            <person name="Radune D."/>
            <person name="Ketchum K.A."/>
            <person name="Dougherty B.A."/>
            <person name="Fraser C.M."/>
        </authorList>
    </citation>
    <scope>NUCLEOTIDE SEQUENCE [LARGE SCALE GENOMIC DNA]</scope>
    <source>
        <strain>ATCC 700802 / V583</strain>
    </source>
</reference>
<reference key="3">
    <citation type="journal article" date="1989" name="J. Biol. Chem.">
        <title>The streptococcal flavoprotein NADH oxidase. I. Evidence linking NADH oxidase and NADH peroxidase cysteinyl redox centers.</title>
        <authorList>
            <person name="Ahmed S.A."/>
            <person name="Claiborne A."/>
        </authorList>
    </citation>
    <scope>PROTEIN SEQUENCE OF 3-17; 34-52 AND 226-250</scope>
    <source>
        <strain>ATCC 11700 / DSM 20409 / NCIMB 8661 / 10C1</strain>
    </source>
</reference>
<reference key="4">
    <citation type="journal article" date="1993" name="FASEB J.">
        <title>Protein-sulfenic acid stabilization and function in enzyme catalysis and gene regulation.</title>
        <authorList>
            <person name="Claiborne A."/>
            <person name="Miller H."/>
            <person name="Parsonage D."/>
            <person name="Ross R.P."/>
        </authorList>
    </citation>
    <scope>REVIEW</scope>
    <scope>ACTIVE SITE</scope>
    <scope>OXIDATION AT CYS-42</scope>
</reference>
<accession>P37061</accession>
<organism>
    <name type="scientific">Enterococcus faecalis (strain ATCC 700802 / V583)</name>
    <dbReference type="NCBI Taxonomy" id="226185"/>
    <lineage>
        <taxon>Bacteria</taxon>
        <taxon>Bacillati</taxon>
        <taxon>Bacillota</taxon>
        <taxon>Bacilli</taxon>
        <taxon>Lactobacillales</taxon>
        <taxon>Enterococcaceae</taxon>
        <taxon>Enterococcus</taxon>
    </lineage>
</organism>
<dbReference type="EC" id="1.6.3.4" evidence="2"/>
<dbReference type="EMBL" id="X68847">
    <property type="protein sequence ID" value="CAA48728.1"/>
    <property type="molecule type" value="Genomic_DNA"/>
</dbReference>
<dbReference type="EMBL" id="AE016830">
    <property type="protein sequence ID" value="AAO81372.1"/>
    <property type="molecule type" value="Genomic_DNA"/>
</dbReference>
<dbReference type="PIR" id="S26965">
    <property type="entry name" value="S26965"/>
</dbReference>
<dbReference type="RefSeq" id="NP_815302.1">
    <property type="nucleotide sequence ID" value="NC_004668.1"/>
</dbReference>
<dbReference type="RefSeq" id="WP_002361833.1">
    <property type="nucleotide sequence ID" value="NZ_KE136528.1"/>
</dbReference>
<dbReference type="SMR" id="P37061"/>
<dbReference type="STRING" id="226185.EF_1586"/>
<dbReference type="PeroxiBase" id="5456">
    <property type="entry name" value="EfNadOxd01"/>
</dbReference>
<dbReference type="EnsemblBacteria" id="AAO81372">
    <property type="protein sequence ID" value="AAO81372"/>
    <property type="gene ID" value="EF_1586"/>
</dbReference>
<dbReference type="KEGG" id="efa:EF1586"/>
<dbReference type="PATRIC" id="fig|226185.45.peg.1919"/>
<dbReference type="eggNOG" id="COG0446">
    <property type="taxonomic scope" value="Bacteria"/>
</dbReference>
<dbReference type="HOGENOM" id="CLU_003291_1_0_9"/>
<dbReference type="SABIO-RK" id="P37061"/>
<dbReference type="Proteomes" id="UP000001415">
    <property type="component" value="Chromosome"/>
</dbReference>
<dbReference type="GO" id="GO:0008137">
    <property type="term" value="F:NADH dehydrogenase (ubiquinone) activity"/>
    <property type="evidence" value="ECO:0007669"/>
    <property type="project" value="UniProtKB-EC"/>
</dbReference>
<dbReference type="Gene3D" id="3.30.390.30">
    <property type="match status" value="1"/>
</dbReference>
<dbReference type="Gene3D" id="3.50.50.60">
    <property type="entry name" value="FAD/NAD(P)-binding domain"/>
    <property type="match status" value="2"/>
</dbReference>
<dbReference type="InterPro" id="IPR050260">
    <property type="entry name" value="FAD-bd_OxRdtase"/>
</dbReference>
<dbReference type="InterPro" id="IPR036188">
    <property type="entry name" value="FAD/NAD-bd_sf"/>
</dbReference>
<dbReference type="InterPro" id="IPR023753">
    <property type="entry name" value="FAD/NAD-binding_dom"/>
</dbReference>
<dbReference type="InterPro" id="IPR016156">
    <property type="entry name" value="FAD/NAD-linked_Rdtase_dimer_sf"/>
</dbReference>
<dbReference type="InterPro" id="IPR004099">
    <property type="entry name" value="Pyr_nucl-diS_OxRdtase_dimer"/>
</dbReference>
<dbReference type="PANTHER" id="PTHR43429:SF1">
    <property type="entry name" value="NAD(P)H SULFUR OXIDOREDUCTASE (COA-DEPENDENT)"/>
    <property type="match status" value="1"/>
</dbReference>
<dbReference type="PANTHER" id="PTHR43429">
    <property type="entry name" value="PYRIDINE NUCLEOTIDE-DISULFIDE OXIDOREDUCTASE DOMAIN-CONTAINING"/>
    <property type="match status" value="1"/>
</dbReference>
<dbReference type="Pfam" id="PF07992">
    <property type="entry name" value="Pyr_redox_2"/>
    <property type="match status" value="1"/>
</dbReference>
<dbReference type="Pfam" id="PF02852">
    <property type="entry name" value="Pyr_redox_dim"/>
    <property type="match status" value="1"/>
</dbReference>
<dbReference type="PRINTS" id="PR00368">
    <property type="entry name" value="FADPNR"/>
</dbReference>
<dbReference type="PRINTS" id="PR00411">
    <property type="entry name" value="PNDRDTASEI"/>
</dbReference>
<dbReference type="SUPFAM" id="SSF51905">
    <property type="entry name" value="FAD/NAD(P)-binding domain"/>
    <property type="match status" value="1"/>
</dbReference>
<dbReference type="SUPFAM" id="SSF55424">
    <property type="entry name" value="FAD/NAD-linked reductases, dimerisation (C-terminal) domain"/>
    <property type="match status" value="1"/>
</dbReference>
<proteinExistence type="evidence at protein level"/>